<proteinExistence type="evidence at protein level"/>
<comment type="function">
    <text evidence="4 5 7 8 10">Endoribonuclease that plays a central role during spermatogenesis by repressing transposable elements and preventing their mobilization, which is essential for the germline integrity (PubMed:19460866, PubMed:27693359). Plays an essential role in meiotic differentiation of spermatocytes, germ cell differentiation and in self-renewal of spermatogonial stem cells (PubMed:19460866, PubMed:25558067, PubMed:27693359). Its presence in oocytes suggests that it may participate in similar functions during oogenesis in females (PubMed:18191035). Acts via the piRNA metabolic process, which mediates the repression of transposable elements during meiosis by forming complexes composed of piRNAs and Piwi proteins and govern the methylation and subsequent repression of transposons (PubMed:19460866, PubMed:25558067, PubMed:27693359). Directly binds piRNAs, a class of 24 to 30 nucleotide RNAs that are generated by a Dicer-independent mechanism and are primarily derived from transposons and other repeated sequence elements (PubMed:19460866, PubMed:25558067, PubMed:27693359). Recognizes piRNAs containing a phosphate at the 5'-end and a 2'-O-methylation modification at the 3'-end (PubMed:27693359). Strongly prefers a uridine in the first position of their guide (g1U preference, also named 1U-bias) and a complementary adenosine in the target (t1A bias) (PubMed:24757166, PubMed:27693359). Plays a key role in the piRNA amplification loop, also named ping-pong amplification cycle: antisense piRNA-bound Siwi and sense piRNA-bound Ago3 reciprocally cleave complementary transcripts, to couple the amplification of piRNAs with the repression of transposable elements. In this process Siwi acts as a 'slicer-competent' piRNA endoribonuclease that cleaves primary piRNAs, which are then loaded onto Ago3 (PubMed:27693359). In this process, Siwi requires the RNA unwinding activity of the RNA helicase Vasa for the release of the cleavage products (PubMed:25558067).</text>
</comment>
<comment type="cofactor">
    <cofactor evidence="10">
        <name>Mg(2+)</name>
        <dbReference type="ChEBI" id="CHEBI:18420"/>
    </cofactor>
</comment>
<comment type="subunit">
    <text evidence="6 8 9">Interacts (when symmetrically methylated) with Papi/TDRKH (PubMed:23970546, PubMed:26919431). Interacts with Vasa (PubMed:25558067).</text>
</comment>
<comment type="subcellular location">
    <subcellularLocation>
        <location evidence="8">Cytoplasm</location>
    </subcellularLocation>
    <text evidence="8">Component of the meiotic nuage, also named P granule, a germ-cell-specific organelle required to repress transposon activity during meiosis (PubMed:25558067).</text>
</comment>
<comment type="tissue specificity">
    <text evidence="4">Highly expressed in the larval testis, pupal ovary and adult eggs.</text>
</comment>
<comment type="domain">
    <text evidence="10">Shows a strong structural resemblance to the argonaute/Ago subfamily. The domains (N, PAZ, MID and PIWI) and linkers (L0, L1, and L2) assemble into a typical bi-lobed (N-PAZ lobe and MID-PIWI lobe) architecture, in which the 5' and 3' ends of the bound piRNA are anchored by the MID-PIWI and PAZ domains, respectively. However, the relative orientation of these two lobes differs significantly between Siwi and the Ago-clade proteins: the N-PAZ lobe in Siwi rotates significantly downward. Additional hinge motions between N and PAZ domains exist, due to a distinct set of contacts at the interface. Three out of the four residues in the DEDH catalytic tetrad are well-preserved. The fourth, Glu-708, is located in a disordered loop and likely joins the active site upon the guide-target RNA duplex formation. This 'unplugged' active site scheme is found in Agos of some bacteria.</text>
</comment>
<comment type="PTM">
    <text evidence="6 9">Arginine methylation is required for the interaction with Tudor domain-containing protein Papi/TDRKH (PubMed:23970546, PubMed:26919431).</text>
</comment>
<comment type="similarity">
    <text evidence="12">Belongs to the argonaute family. Piwi subfamily.</text>
</comment>
<name>SIWI_BOMMO</name>
<protein>
    <recommendedName>
        <fullName evidence="12">Piwi-like protein Siwi</fullName>
        <ecNumber evidence="10">3.1.26.-</ecNumber>
    </recommendedName>
</protein>
<sequence>MSEPRGRGRARGRAGRGGDGGGPAPRRPGEQAGPSQQSMPPGPRPQPPSGWGPQSSVPPVRAGVPTPTAQAGRASHRVTPTTHEHPGDIDVQQRMQKLELGPHSSGGGDASSVVGRGSRRGGGRVLPETISILRTRPEAVTSKKGTSGTPLDLLANYFTVETTPKWGLYQYHVDISPEEDSTGVRKALMRVHSKTLGGYLFDGTVLYTVNRLHPDPMELYSDRKTDNERMRILIKLTCEVSPGDYHYIQIFNIIIRKCFNLLKLQLMGRDYFDPEAKIDIPEFKLQIWPGYKTTINQYEDRLLLVTEIAHKVLRMDTVLQMLSEYAATKGNNYKKIFLEDVVGKIVMTDYNKRTYRVDDVAWNVSPKSTFKMRDENITYIEYYYKKYNLRIQDPGQPLLISRSKPREIRAGLPELIYLVPELCRQTGLSDEMRANFKLMRSLDVHTKIGPDKRIEKLNNFNRRFTSTPEVVEELATWSLKLSKELVKIKGRQLPPENIIQANNVKYPAGDTTEGWTRDMRSKHLLAIAQLNSWVVITPERQRRDTESFIDLIIKTGGGVGFRMRSPDLVVIRHDGPIEYANMCEEVIARKNPALILCVLARNYADRYEAIKKKCTVDRAVPTQVVCARNMSSKSAMSIATKVAIQINCKLGGSPWTVDIPLPSLMVVGYDVCHDTRSKEKSFGAFVATLDKQMTQYYSIVNAHTSGEELSSHMGFNIASAVKKFREKNGTYPARIFIYRDGVGDGQIPYVHSHEVAEIKKKLAEIYAGVEIKLAFIIVSKRINTRIFVQRGRSGENPRPGTVIDDVVTLPERYDFYLVSQNVREGTIAPTSYNVIEDTTGLNPDRIQRLTYKLTHLYFNCSSQVRVPSVCQYAHKLAFLAANSLHNQPHYSLNETLYFL</sequence>
<organism>
    <name type="scientific">Bombyx mori</name>
    <name type="common">Silk moth</name>
    <dbReference type="NCBI Taxonomy" id="7091"/>
    <lineage>
        <taxon>Eukaryota</taxon>
        <taxon>Metazoa</taxon>
        <taxon>Ecdysozoa</taxon>
        <taxon>Arthropoda</taxon>
        <taxon>Hexapoda</taxon>
        <taxon>Insecta</taxon>
        <taxon>Pterygota</taxon>
        <taxon>Neoptera</taxon>
        <taxon>Endopterygota</taxon>
        <taxon>Lepidoptera</taxon>
        <taxon>Glossata</taxon>
        <taxon>Ditrysia</taxon>
        <taxon>Bombycoidea</taxon>
        <taxon>Bombycidae</taxon>
        <taxon>Bombycinae</taxon>
        <taxon>Bombyx</taxon>
    </lineage>
</organism>
<reference key="1">
    <citation type="journal article" date="2007" name="Entomotech">
        <title>Molecular cloning of Piwi and Aubergine homolog genes from the silkworm, Bombyx mori.</title>
        <authorList>
            <person name="Tatsuke T."/>
            <person name="Tsukioka H."/>
            <person name="Sakashita K."/>
            <person name="Mitsunobu H."/>
            <person name="Lee J."/>
            <person name="Kawaguchi Y."/>
            <person name="Kusakabe T."/>
        </authorList>
    </citation>
    <scope>NUCLEOTIDE SEQUENCE [MRNA]</scope>
</reference>
<reference key="2">
    <citation type="journal article" date="2008" name="Biochem. Biophys. Res. Commun.">
        <title>Developmentally synchronized expression of two Bombyx mori Piwi subfamily genes, SIWI and BmAGO3 in germ-line cells.</title>
        <authorList>
            <person name="Kawaoka S."/>
            <person name="Minami K."/>
            <person name="Katsuma S."/>
            <person name="Mita K."/>
            <person name="Shimada T."/>
        </authorList>
    </citation>
    <scope>NUCLEOTIDE SEQUENCE [MRNA]</scope>
    <scope>FUNCTION</scope>
    <scope>TISSUE SPECIFICITY</scope>
</reference>
<reference key="3">
    <citation type="submission" date="2007-09" db="EMBL/GenBank/DDBJ databases">
        <authorList>
            <person name="Wang G.H."/>
            <person name="Xia Q.Y."/>
            <person name="Jiang L."/>
            <person name="Chen J."/>
            <person name="Zhu L."/>
        </authorList>
    </citation>
    <scope>NUCLEOTIDE SEQUENCE [MRNA]</scope>
</reference>
<reference key="4">
    <citation type="journal article" date="2008" name="Insect Biochem. Mol. Biol.">
        <title>The genome of a lepidopteran model insect, the silkworm Bombyx mori.</title>
        <authorList>
            <consortium name="International Silkworm Genome Consortium"/>
        </authorList>
    </citation>
    <scope>NUCLEOTIDE SEQUENCE [LARGE SCALE GENOMIC DNA]</scope>
    <source>
        <strain>p50T</strain>
    </source>
</reference>
<reference key="5">
    <citation type="journal article" date="2007" name="Biochem. Biophys. Res. Commun.">
        <title>Identification and characterization of Piwi subfamily in insects.</title>
        <authorList>
            <person name="Zhou X."/>
            <person name="Liao Z."/>
            <person name="Jia Q."/>
            <person name="Cheng L."/>
            <person name="Li F."/>
        </authorList>
    </citation>
    <scope>NUCLEOTIDE SEQUENCE [MRNA] OF 181-792</scope>
</reference>
<reference key="6">
    <citation type="journal article" date="2009" name="RNA">
        <title>The Bombyx ovary-derived cell line endogenously expresses PIWI/PIWI-interacting RNA complexes.</title>
        <authorList>
            <person name="Kawaoka S."/>
            <person name="Hayashi N."/>
            <person name="Suzuki Y."/>
            <person name="Abe H."/>
            <person name="Sugano S."/>
            <person name="Tomari Y."/>
            <person name="Shimada T."/>
            <person name="Katsuma S."/>
        </authorList>
    </citation>
    <scope>FUNCTION</scope>
</reference>
<reference key="7">
    <citation type="journal article" date="2013" name="RNA">
        <title>Mitochondrial protein BmPAPI modulates the length of mature piRNAs.</title>
        <authorList>
            <person name="Honda S."/>
            <person name="Kirino Y."/>
            <person name="Maragkakis M."/>
            <person name="Alexiou P."/>
            <person name="Ohtaki A."/>
            <person name="Murali R."/>
            <person name="Mourelatos Z."/>
            <person name="Kirino Y."/>
        </authorList>
    </citation>
    <scope>INTERACTION WITH PAPI</scope>
    <scope>DOMAIN</scope>
</reference>
<reference key="8">
    <citation type="journal article" date="2014" name="RNA">
        <title>The MID-PIWI module of Piwi proteins specifies nucleotide- and strand-biases of piRNAs.</title>
        <authorList>
            <person name="Cora E."/>
            <person name="Pandey R.R."/>
            <person name="Xiol J."/>
            <person name="Taylor J."/>
            <person name="Sachidanandam R."/>
            <person name="McCarthy A.A."/>
            <person name="Pillai R.S."/>
        </authorList>
    </citation>
    <scope>FUNCTION</scope>
    <scope>MUTAGENESIS OF ASN-602 AND TYR-607</scope>
</reference>
<reference key="9">
    <citation type="journal article" date="2015" name="Cell Rep.">
        <title>Respective functions of two distinct Siwi complexes assembled during PIWI-interacting RNA biogenesis in Bombyx germ cells.</title>
        <authorList>
            <person name="Nishida K.M."/>
            <person name="Iwasaki Y.W."/>
            <person name="Murota Y."/>
            <person name="Nagao A."/>
            <person name="Mannen T."/>
            <person name="Kato Y."/>
            <person name="Siomi H."/>
            <person name="Siomi M.C."/>
        </authorList>
    </citation>
    <scope>FUNCTION</scope>
    <scope>SUBCELLULAR LOCATION</scope>
</reference>
<reference key="10">
    <citation type="journal article" date="2016" name="Cell">
        <title>Identification and functional analysis of the pre-piRNA 3' trimmer in silkworms.</title>
        <authorList>
            <person name="Izumi N."/>
            <person name="Shoji K."/>
            <person name="Sakaguchi Y."/>
            <person name="Honda S."/>
            <person name="Kirino Y."/>
            <person name="Suzuki T."/>
            <person name="Katsuma S."/>
            <person name="Tomari Y."/>
        </authorList>
    </citation>
    <scope>INTERACTION WITH PAPI</scope>
    <scope>DOMAIN</scope>
</reference>
<reference key="11">
    <citation type="journal article" date="2016" name="Cell">
        <title>Crystal structure of Silkworm PIWI-clade argonaute Siwi bound to piRNA.</title>
        <authorList>
            <person name="Matsumoto N."/>
            <person name="Nishimasu H."/>
            <person name="Sakakibara K."/>
            <person name="Nishida K.M."/>
            <person name="Hirano T."/>
            <person name="Ishitani R."/>
            <person name="Siomi H."/>
            <person name="Siomi M.C."/>
            <person name="Nureki O."/>
        </authorList>
    </citation>
    <scope>X-RAY CRYSTALLOGRAPHY (2.40 ANGSTROMS)IN COMPLEX WITH PIRNA AND MAGNESIUM</scope>
    <scope>FUNCTION</scope>
    <scope>CATALYTIC ACTIVITY</scope>
    <scope>ACTIVE SITE</scope>
    <scope>COFACTOR</scope>
    <scope>DOMAIN</scope>
    <scope>MUTAGENESIS OF LYS-611; GLN-623; GLN-645; LYS-649; ASP-670; GLU-708; ASP-740 AND HIS-874</scope>
</reference>
<feature type="chain" id="PRO_0000439355" description="Piwi-like protein Siwi">
    <location>
        <begin position="1"/>
        <end position="899"/>
    </location>
</feature>
<feature type="domain" description="PAZ" evidence="1">
    <location>
        <begin position="317"/>
        <end position="427"/>
    </location>
</feature>
<feature type="domain" description="Piwi" evidence="2">
    <location>
        <begin position="594"/>
        <end position="885"/>
    </location>
</feature>
<feature type="region of interest" description="Disordered" evidence="3">
    <location>
        <begin position="1"/>
        <end position="124"/>
    </location>
</feature>
<feature type="region of interest" description="L0 region" evidence="13">
    <location>
        <begin position="130"/>
        <end position="168"/>
    </location>
</feature>
<feature type="region of interest" description="N region" evidence="13">
    <location>
        <begin position="169"/>
        <end position="241"/>
    </location>
</feature>
<feature type="region of interest" description="L1 region" evidence="13">
    <location>
        <begin position="242"/>
        <end position="318"/>
    </location>
</feature>
<feature type="region of interest" description="L2 region" evidence="13">
    <location>
        <begin position="428"/>
        <end position="527"/>
    </location>
</feature>
<feature type="region of interest" description="MID region" evidence="13">
    <location>
        <begin position="528"/>
        <end position="658"/>
    </location>
</feature>
<feature type="compositionally biased region" description="Pro residues" evidence="3">
    <location>
        <begin position="40"/>
        <end position="50"/>
    </location>
</feature>
<feature type="active site" evidence="10 14">
    <location>
        <position position="670"/>
    </location>
</feature>
<feature type="active site" evidence="10 14">
    <location>
        <position position="708"/>
    </location>
</feature>
<feature type="active site" evidence="10 14">
    <location>
        <position position="740"/>
    </location>
</feature>
<feature type="active site" evidence="10 14">
    <location>
        <position position="874"/>
    </location>
</feature>
<feature type="binding site" evidence="10 14">
    <location>
        <position position="645"/>
    </location>
    <ligand>
        <name>Mg(2+)</name>
        <dbReference type="ChEBI" id="CHEBI:18420"/>
    </ligand>
</feature>
<feature type="binding site" evidence="10 14">
    <location>
        <position position="899"/>
    </location>
    <ligand>
        <name>Mg(2+)</name>
        <dbReference type="ChEBI" id="CHEBI:18420"/>
    </ligand>
</feature>
<feature type="mutagenesis site" description="Does not affect ability to recognize uridine at the first position of piRNAs (g1U preference, also named 1U-bias)." evidence="7">
    <original>N</original>
    <variation>Q</variation>
    <location>
        <position position="602"/>
    </location>
</feature>
<feature type="mutagenesis site" description="Reduced piRNA-binding." evidence="7">
    <original>Y</original>
    <variation>E</variation>
    <location>
        <position position="607"/>
    </location>
</feature>
<feature type="mutagenesis site" description="Does not affect ability to recognize uridine at the first position of piRNAs (g1U preference, also named 1U-bias)." evidence="7">
    <original>Y</original>
    <variation>L</variation>
    <location>
        <position position="607"/>
    </location>
</feature>
<feature type="mutagenesis site" description="Reduced piRNA-binding." evidence="10">
    <original>K</original>
    <variation>A</variation>
    <location>
        <position position="611"/>
    </location>
</feature>
<feature type="mutagenesis site" description="Reduced piRNA-binding." evidence="10">
    <original>Q</original>
    <variation>A</variation>
    <location>
        <position position="623"/>
    </location>
</feature>
<feature type="mutagenesis site" description="Reduced piRNA-binding." evidence="10">
    <original>Q</original>
    <variation>A</variation>
    <location>
        <position position="645"/>
    </location>
</feature>
<feature type="mutagenesis site" description="Reduced piRNA-binding." evidence="10">
    <original>K</original>
    <variation>A</variation>
    <location>
        <position position="649"/>
    </location>
</feature>
<feature type="mutagenesis site" description="Abolished endoribonuclease activity." evidence="10">
    <original>D</original>
    <variation>A</variation>
    <location>
        <position position="670"/>
    </location>
</feature>
<feature type="mutagenesis site" description="Abolished endoribonuclease activity." evidence="10">
    <original>E</original>
    <variation>A</variation>
    <location>
        <position position="708"/>
    </location>
</feature>
<feature type="mutagenesis site" description="Abolished endoribonuclease activity." evidence="10">
    <original>D</original>
    <variation>A</variation>
    <location>
        <position position="740"/>
    </location>
</feature>
<feature type="mutagenesis site" description="Abolished endoribonuclease activity." evidence="10">
    <original>H</original>
    <variation>A</variation>
    <location>
        <position position="874"/>
    </location>
</feature>
<feature type="strand" evidence="15">
    <location>
        <begin position="148"/>
        <end position="162"/>
    </location>
</feature>
<feature type="strand" evidence="15">
    <location>
        <begin position="168"/>
        <end position="175"/>
    </location>
</feature>
<feature type="helix" evidence="15">
    <location>
        <begin position="182"/>
        <end position="190"/>
    </location>
</feature>
<feature type="helix" evidence="15">
    <location>
        <begin position="193"/>
        <end position="196"/>
    </location>
</feature>
<feature type="strand" evidence="15">
    <location>
        <begin position="198"/>
        <end position="210"/>
    </location>
</feature>
<feature type="strand" evidence="15">
    <location>
        <begin position="218"/>
        <end position="221"/>
    </location>
</feature>
<feature type="strand" evidence="15">
    <location>
        <begin position="224"/>
        <end position="226"/>
    </location>
</feature>
<feature type="strand" evidence="15">
    <location>
        <begin position="230"/>
        <end position="240"/>
    </location>
</feature>
<feature type="helix" evidence="15">
    <location>
        <begin position="245"/>
        <end position="261"/>
    </location>
</feature>
<feature type="strand" evidence="15">
    <location>
        <begin position="265"/>
        <end position="267"/>
    </location>
</feature>
<feature type="strand" evidence="15">
    <location>
        <begin position="270"/>
        <end position="272"/>
    </location>
</feature>
<feature type="helix" evidence="15">
    <location>
        <begin position="274"/>
        <end position="276"/>
    </location>
</feature>
<feature type="strand" evidence="15">
    <location>
        <begin position="278"/>
        <end position="280"/>
    </location>
</feature>
<feature type="helix" evidence="15">
    <location>
        <begin position="281"/>
        <end position="283"/>
    </location>
</feature>
<feature type="strand" evidence="15">
    <location>
        <begin position="285"/>
        <end position="297"/>
    </location>
</feature>
<feature type="strand" evidence="15">
    <location>
        <begin position="299"/>
        <end position="317"/>
    </location>
</feature>
<feature type="helix" evidence="15">
    <location>
        <begin position="318"/>
        <end position="328"/>
    </location>
</feature>
<feature type="helix" evidence="15">
    <location>
        <begin position="336"/>
        <end position="341"/>
    </location>
</feature>
<feature type="strand" evidence="15">
    <location>
        <begin position="345"/>
        <end position="348"/>
    </location>
</feature>
<feature type="turn" evidence="15">
    <location>
        <begin position="349"/>
        <end position="352"/>
    </location>
</feature>
<feature type="strand" evidence="15">
    <location>
        <begin position="353"/>
        <end position="356"/>
    </location>
</feature>
<feature type="strand" evidence="15">
    <location>
        <begin position="359"/>
        <end position="361"/>
    </location>
</feature>
<feature type="strand" evidence="15">
    <location>
        <begin position="368"/>
        <end position="372"/>
    </location>
</feature>
<feature type="strand" evidence="15">
    <location>
        <begin position="375"/>
        <end position="378"/>
    </location>
</feature>
<feature type="helix" evidence="15">
    <location>
        <begin position="379"/>
        <end position="386"/>
    </location>
</feature>
<feature type="strand" evidence="15">
    <location>
        <begin position="398"/>
        <end position="403"/>
    </location>
</feature>
<feature type="strand" evidence="15">
    <location>
        <begin position="408"/>
        <end position="411"/>
    </location>
</feature>
<feature type="strand" evidence="15">
    <location>
        <begin position="414"/>
        <end position="418"/>
    </location>
</feature>
<feature type="helix" evidence="15">
    <location>
        <begin position="420"/>
        <end position="422"/>
    </location>
</feature>
<feature type="strand" evidence="15">
    <location>
        <begin position="423"/>
        <end position="427"/>
    </location>
</feature>
<feature type="helix" evidence="15">
    <location>
        <begin position="430"/>
        <end position="434"/>
    </location>
</feature>
<feature type="helix" evidence="15">
    <location>
        <begin position="436"/>
        <end position="446"/>
    </location>
</feature>
<feature type="helix" evidence="15">
    <location>
        <begin position="450"/>
        <end position="465"/>
    </location>
</feature>
<feature type="helix" evidence="15">
    <location>
        <begin position="468"/>
        <end position="475"/>
    </location>
</feature>
<feature type="turn" evidence="15">
    <location>
        <begin position="476"/>
        <end position="478"/>
    </location>
</feature>
<feature type="strand" evidence="15">
    <location>
        <begin position="479"/>
        <end position="481"/>
    </location>
</feature>
<feature type="strand" evidence="15">
    <location>
        <begin position="486"/>
        <end position="492"/>
    </location>
</feature>
<feature type="strand" evidence="15">
    <location>
        <begin position="497"/>
        <end position="499"/>
    </location>
</feature>
<feature type="helix" evidence="15">
    <location>
        <begin position="501"/>
        <end position="503"/>
    </location>
</feature>
<feature type="strand" evidence="15">
    <location>
        <begin position="505"/>
        <end position="507"/>
    </location>
</feature>
<feature type="turn" evidence="15">
    <location>
        <begin position="512"/>
        <end position="515"/>
    </location>
</feature>
<feature type="helix" evidence="15">
    <location>
        <begin position="516"/>
        <end position="519"/>
    </location>
</feature>
<feature type="strand" evidence="15">
    <location>
        <begin position="533"/>
        <end position="539"/>
    </location>
</feature>
<feature type="helix" evidence="15">
    <location>
        <begin position="542"/>
        <end position="558"/>
    </location>
</feature>
<feature type="strand" evidence="15">
    <location>
        <begin position="567"/>
        <end position="572"/>
    </location>
</feature>
<feature type="helix" evidence="15">
    <location>
        <begin position="576"/>
        <end position="589"/>
    </location>
</feature>
<feature type="strand" evidence="15">
    <location>
        <begin position="593"/>
        <end position="601"/>
    </location>
</feature>
<feature type="helix" evidence="15">
    <location>
        <begin position="604"/>
        <end position="615"/>
    </location>
</feature>
<feature type="strand" evidence="15">
    <location>
        <begin position="622"/>
        <end position="626"/>
    </location>
</feature>
<feature type="helix" evidence="15">
    <location>
        <begin position="627"/>
        <end position="630"/>
    </location>
</feature>
<feature type="helix" evidence="15">
    <location>
        <begin position="635"/>
        <end position="649"/>
    </location>
</feature>
<feature type="strand" evidence="15">
    <location>
        <begin position="664"/>
        <end position="673"/>
    </location>
</feature>
<feature type="strand" evidence="15">
    <location>
        <begin position="675"/>
        <end position="677"/>
    </location>
</feature>
<feature type="strand" evidence="15">
    <location>
        <begin position="681"/>
        <end position="688"/>
    </location>
</feature>
<feature type="strand" evidence="15">
    <location>
        <begin position="696"/>
        <end position="703"/>
    </location>
</feature>
<feature type="helix" evidence="15">
    <location>
        <begin position="710"/>
        <end position="728"/>
    </location>
</feature>
<feature type="strand" evidence="15">
    <location>
        <begin position="733"/>
        <end position="741"/>
    </location>
</feature>
<feature type="helix" evidence="15">
    <location>
        <begin position="744"/>
        <end position="746"/>
    </location>
</feature>
<feature type="helix" evidence="15">
    <location>
        <begin position="747"/>
        <end position="752"/>
    </location>
</feature>
<feature type="helix" evidence="15">
    <location>
        <begin position="754"/>
        <end position="766"/>
    </location>
</feature>
<feature type="strand" evidence="15">
    <location>
        <begin position="773"/>
        <end position="780"/>
    </location>
</feature>
<feature type="strand" evidence="15">
    <location>
        <begin position="786"/>
        <end position="790"/>
    </location>
</feature>
<feature type="strand" evidence="15">
    <location>
        <begin position="793"/>
        <end position="795"/>
    </location>
</feature>
<feature type="strand" evidence="15">
    <location>
        <begin position="801"/>
        <end position="803"/>
    </location>
</feature>
<feature type="strand" evidence="15">
    <location>
        <begin position="805"/>
        <end position="808"/>
    </location>
</feature>
<feature type="strand" evidence="15">
    <location>
        <begin position="814"/>
        <end position="817"/>
    </location>
</feature>
<feature type="strand" evidence="15">
    <location>
        <begin position="823"/>
        <end position="825"/>
    </location>
</feature>
<feature type="strand" evidence="15">
    <location>
        <begin position="830"/>
        <end position="837"/>
    </location>
</feature>
<feature type="helix" evidence="15">
    <location>
        <begin position="843"/>
        <end position="853"/>
    </location>
</feature>
<feature type="helix" evidence="15">
    <location>
        <begin position="868"/>
        <end position="882"/>
    </location>
</feature>
<feature type="helix" evidence="15">
    <location>
        <begin position="890"/>
        <end position="892"/>
    </location>
</feature>
<keyword id="KW-0002">3D-structure</keyword>
<keyword id="KW-0963">Cytoplasm</keyword>
<keyword id="KW-0217">Developmental protein</keyword>
<keyword id="KW-0221">Differentiation</keyword>
<keyword id="KW-0255">Endonuclease</keyword>
<keyword id="KW-0378">Hydrolase</keyword>
<keyword id="KW-0460">Magnesium</keyword>
<keyword id="KW-0469">Meiosis</keyword>
<keyword id="KW-0479">Metal-binding</keyword>
<keyword id="KW-0488">Methylation</keyword>
<keyword id="KW-0540">Nuclease</keyword>
<keyword id="KW-1185">Reference proteome</keyword>
<keyword id="KW-0694">RNA-binding</keyword>
<keyword id="KW-0943">RNA-mediated gene silencing</keyword>
<keyword id="KW-0744">Spermatogenesis</keyword>
<accession>A8D8P8</accession>
<accession>A7BJS4</accession>
<accession>A7LM14</accession>
<dbReference type="EC" id="3.1.26.-" evidence="10"/>
<dbReference type="EMBL" id="AB332313">
    <property type="protein sequence ID" value="BAF73718.2"/>
    <property type="molecule type" value="mRNA"/>
</dbReference>
<dbReference type="EMBL" id="AB372006">
    <property type="protein sequence ID" value="BAF98574.1"/>
    <property type="molecule type" value="mRNA"/>
</dbReference>
<dbReference type="EMBL" id="EU143547">
    <property type="protein sequence ID" value="ABV60274.1"/>
    <property type="molecule type" value="mRNA"/>
</dbReference>
<dbReference type="EMBL" id="BABH01033344">
    <property type="status" value="NOT_ANNOTATED_CDS"/>
    <property type="molecule type" value="Genomic_DNA"/>
</dbReference>
<dbReference type="EMBL" id="EU034629">
    <property type="protein sequence ID" value="ABS53348.1"/>
    <property type="molecule type" value="mRNA"/>
</dbReference>
<dbReference type="RefSeq" id="NP_001098066.2">
    <property type="nucleotide sequence ID" value="NM_001104596.2"/>
</dbReference>
<dbReference type="RefSeq" id="XP_012545276.1">
    <property type="nucleotide sequence ID" value="XM_012689822.1"/>
</dbReference>
<dbReference type="PDB" id="5GUH">
    <property type="method" value="X-ray"/>
    <property type="resolution" value="2.40 A"/>
    <property type="chains" value="A=1-899"/>
</dbReference>
<dbReference type="PDBsum" id="5GUH"/>
<dbReference type="SMR" id="A8D8P8"/>
<dbReference type="FunCoup" id="A8D8P8">
    <property type="interactions" value="16"/>
</dbReference>
<dbReference type="STRING" id="7091.A8D8P8"/>
<dbReference type="PaxDb" id="7091-BGIBMGA010644-TA"/>
<dbReference type="EnsemblMetazoa" id="NM_001104596.2">
    <property type="protein sequence ID" value="NP_001098066.2"/>
    <property type="gene ID" value="GeneID_100125336"/>
</dbReference>
<dbReference type="EnsemblMetazoa" id="XM_012689822.3">
    <property type="protein sequence ID" value="XP_012545276.1"/>
    <property type="gene ID" value="GeneID_100125336"/>
</dbReference>
<dbReference type="GeneID" id="100125336"/>
<dbReference type="KEGG" id="bmor:100125336"/>
<dbReference type="CTD" id="34524"/>
<dbReference type="eggNOG" id="KOG1042">
    <property type="taxonomic scope" value="Eukaryota"/>
</dbReference>
<dbReference type="HOGENOM" id="CLU_008813_0_0_1"/>
<dbReference type="InParanoid" id="A8D8P8"/>
<dbReference type="OMA" id="WSGTCRV"/>
<dbReference type="OrthoDB" id="516248at7088"/>
<dbReference type="Proteomes" id="UP000005204">
    <property type="component" value="Unassembled WGS sequence"/>
</dbReference>
<dbReference type="GO" id="GO:0005737">
    <property type="term" value="C:cytoplasm"/>
    <property type="evidence" value="ECO:0007669"/>
    <property type="project" value="UniProtKB-SubCell"/>
</dbReference>
<dbReference type="GO" id="GO:1990923">
    <property type="term" value="C:PET complex"/>
    <property type="evidence" value="ECO:0000314"/>
    <property type="project" value="UniProtKB"/>
</dbReference>
<dbReference type="GO" id="GO:0000287">
    <property type="term" value="F:magnesium ion binding"/>
    <property type="evidence" value="ECO:0000314"/>
    <property type="project" value="UniProtKB"/>
</dbReference>
<dbReference type="GO" id="GO:0034584">
    <property type="term" value="F:piRNA binding"/>
    <property type="evidence" value="ECO:0000314"/>
    <property type="project" value="UniProtKB"/>
</dbReference>
<dbReference type="GO" id="GO:0004521">
    <property type="term" value="F:RNA endonuclease activity"/>
    <property type="evidence" value="ECO:0000315"/>
    <property type="project" value="UniProtKB"/>
</dbReference>
<dbReference type="GO" id="GO:0030154">
    <property type="term" value="P:cell differentiation"/>
    <property type="evidence" value="ECO:0007669"/>
    <property type="project" value="UniProtKB-KW"/>
</dbReference>
<dbReference type="GO" id="GO:0030237">
    <property type="term" value="P:female sex determination"/>
    <property type="evidence" value="ECO:0000315"/>
    <property type="project" value="FlyBase"/>
</dbReference>
<dbReference type="GO" id="GO:0051321">
    <property type="term" value="P:meiotic cell cycle"/>
    <property type="evidence" value="ECO:0007669"/>
    <property type="project" value="UniProtKB-KW"/>
</dbReference>
<dbReference type="GO" id="GO:0034587">
    <property type="term" value="P:piRNA processing"/>
    <property type="evidence" value="ECO:0000315"/>
    <property type="project" value="UniProtKB"/>
</dbReference>
<dbReference type="GO" id="GO:0140991">
    <property type="term" value="P:piRNA-mediated gene silencing by mRNA destabilization"/>
    <property type="evidence" value="ECO:0000315"/>
    <property type="project" value="FlyBase"/>
</dbReference>
<dbReference type="GO" id="GO:0140965">
    <property type="term" value="P:secondary piRNA processing"/>
    <property type="evidence" value="ECO:0000315"/>
    <property type="project" value="FlyBase"/>
</dbReference>
<dbReference type="GO" id="GO:0007283">
    <property type="term" value="P:spermatogenesis"/>
    <property type="evidence" value="ECO:0007669"/>
    <property type="project" value="UniProtKB-KW"/>
</dbReference>
<dbReference type="CDD" id="cd02845">
    <property type="entry name" value="PAZ_piwi_like"/>
    <property type="match status" value="1"/>
</dbReference>
<dbReference type="CDD" id="cd04658">
    <property type="entry name" value="Piwi_piwi-like_Euk"/>
    <property type="match status" value="1"/>
</dbReference>
<dbReference type="FunFam" id="3.30.420.10:FF:000014">
    <property type="entry name" value="Piwi-like RNA-mediated gene silencing 1"/>
    <property type="match status" value="1"/>
</dbReference>
<dbReference type="FunFam" id="2.170.260.10:FF:000003">
    <property type="entry name" value="Piwi-like RNA-mediated gene silencing 2"/>
    <property type="match status" value="1"/>
</dbReference>
<dbReference type="Gene3D" id="3.40.50.2300">
    <property type="match status" value="1"/>
</dbReference>
<dbReference type="Gene3D" id="2.170.260.10">
    <property type="entry name" value="paz domain"/>
    <property type="match status" value="1"/>
</dbReference>
<dbReference type="Gene3D" id="3.30.420.10">
    <property type="entry name" value="Ribonuclease H-like superfamily/Ribonuclease H"/>
    <property type="match status" value="1"/>
</dbReference>
<dbReference type="InterPro" id="IPR003100">
    <property type="entry name" value="PAZ_dom"/>
</dbReference>
<dbReference type="InterPro" id="IPR036085">
    <property type="entry name" value="PAZ_dom_sf"/>
</dbReference>
<dbReference type="InterPro" id="IPR003165">
    <property type="entry name" value="Piwi"/>
</dbReference>
<dbReference type="InterPro" id="IPR012337">
    <property type="entry name" value="RNaseH-like_sf"/>
</dbReference>
<dbReference type="InterPro" id="IPR036397">
    <property type="entry name" value="RNaseH_sf"/>
</dbReference>
<dbReference type="PANTHER" id="PTHR22891">
    <property type="entry name" value="EUKARYOTIC TRANSLATION INITIATION FACTOR 2C"/>
    <property type="match status" value="1"/>
</dbReference>
<dbReference type="Pfam" id="PF02170">
    <property type="entry name" value="PAZ"/>
    <property type="match status" value="1"/>
</dbReference>
<dbReference type="Pfam" id="PF02171">
    <property type="entry name" value="Piwi"/>
    <property type="match status" value="1"/>
</dbReference>
<dbReference type="Pfam" id="PF23278">
    <property type="entry name" value="Piwi_N"/>
    <property type="match status" value="1"/>
</dbReference>
<dbReference type="SMART" id="SM00949">
    <property type="entry name" value="PAZ"/>
    <property type="match status" value="1"/>
</dbReference>
<dbReference type="SMART" id="SM00950">
    <property type="entry name" value="Piwi"/>
    <property type="match status" value="1"/>
</dbReference>
<dbReference type="SUPFAM" id="SSF101690">
    <property type="entry name" value="PAZ domain"/>
    <property type="match status" value="1"/>
</dbReference>
<dbReference type="SUPFAM" id="SSF53098">
    <property type="entry name" value="Ribonuclease H-like"/>
    <property type="match status" value="1"/>
</dbReference>
<dbReference type="PROSITE" id="PS50821">
    <property type="entry name" value="PAZ"/>
    <property type="match status" value="1"/>
</dbReference>
<dbReference type="PROSITE" id="PS50822">
    <property type="entry name" value="PIWI"/>
    <property type="match status" value="1"/>
</dbReference>
<gene>
    <name evidence="11" type="primary">Siwi</name>
</gene>
<evidence type="ECO:0000255" key="1">
    <source>
        <dbReference type="PROSITE-ProRule" id="PRU00142"/>
    </source>
</evidence>
<evidence type="ECO:0000255" key="2">
    <source>
        <dbReference type="PROSITE-ProRule" id="PRU00150"/>
    </source>
</evidence>
<evidence type="ECO:0000256" key="3">
    <source>
        <dbReference type="SAM" id="MobiDB-lite"/>
    </source>
</evidence>
<evidence type="ECO:0000269" key="4">
    <source>
    </source>
</evidence>
<evidence type="ECO:0000269" key="5">
    <source>
    </source>
</evidence>
<evidence type="ECO:0000269" key="6">
    <source>
    </source>
</evidence>
<evidence type="ECO:0000269" key="7">
    <source>
    </source>
</evidence>
<evidence type="ECO:0000269" key="8">
    <source>
    </source>
</evidence>
<evidence type="ECO:0000269" key="9">
    <source>
    </source>
</evidence>
<evidence type="ECO:0000269" key="10">
    <source>
    </source>
</evidence>
<evidence type="ECO:0000303" key="11">
    <source>
    </source>
</evidence>
<evidence type="ECO:0000305" key="12"/>
<evidence type="ECO:0000305" key="13">
    <source>
    </source>
</evidence>
<evidence type="ECO:0007744" key="14">
    <source>
        <dbReference type="PDB" id="5GUH"/>
    </source>
</evidence>
<evidence type="ECO:0007829" key="15">
    <source>
        <dbReference type="PDB" id="5GUH"/>
    </source>
</evidence>